<protein>
    <recommendedName>
        <fullName>Protein csx2</fullName>
    </recommendedName>
</protein>
<accession>Q9UUE2</accession>
<accession>Q09425</accession>
<gene>
    <name type="primary">csx2</name>
    <name type="ORF">SPBC17G9.08c</name>
</gene>
<dbReference type="EMBL" id="CU329671">
    <property type="protein sequence ID" value="CAB52806.1"/>
    <property type="molecule type" value="Genomic_DNA"/>
</dbReference>
<dbReference type="EMBL" id="D83419">
    <property type="protein sequence ID" value="BAA11920.1"/>
    <property type="molecule type" value="Genomic_DNA"/>
</dbReference>
<dbReference type="PIR" id="T39731">
    <property type="entry name" value="T39731"/>
</dbReference>
<dbReference type="RefSeq" id="NP_595897.1">
    <property type="nucleotide sequence ID" value="NM_001021804.2"/>
</dbReference>
<dbReference type="SMR" id="Q9UUE2"/>
<dbReference type="BioGRID" id="276412">
    <property type="interactions" value="5"/>
</dbReference>
<dbReference type="FunCoup" id="Q9UUE2">
    <property type="interactions" value="212"/>
</dbReference>
<dbReference type="STRING" id="284812.Q9UUE2"/>
<dbReference type="iPTMnet" id="Q9UUE2"/>
<dbReference type="PaxDb" id="4896-SPBC17G9.08c.1"/>
<dbReference type="EnsemblFungi" id="SPBC17G9.08c.1">
    <property type="protein sequence ID" value="SPBC17G9.08c.1:pep"/>
    <property type="gene ID" value="SPBC17G9.08c"/>
</dbReference>
<dbReference type="GeneID" id="2539865"/>
<dbReference type="KEGG" id="spo:2539865"/>
<dbReference type="PomBase" id="SPBC17G9.08c"/>
<dbReference type="VEuPathDB" id="FungiDB:SPBC17G9.08c"/>
<dbReference type="eggNOG" id="KOG0521">
    <property type="taxonomic scope" value="Eukaryota"/>
</dbReference>
<dbReference type="HOGENOM" id="CLU_002728_0_0_1"/>
<dbReference type="InParanoid" id="Q9UUE2"/>
<dbReference type="OMA" id="ICEYANW"/>
<dbReference type="PhylomeDB" id="Q9UUE2"/>
<dbReference type="PRO" id="PR:Q9UUE2"/>
<dbReference type="Proteomes" id="UP000002485">
    <property type="component" value="Chromosome II"/>
</dbReference>
<dbReference type="GO" id="GO:0005829">
    <property type="term" value="C:cytosol"/>
    <property type="evidence" value="ECO:0000314"/>
    <property type="project" value="PomBase"/>
</dbReference>
<dbReference type="GO" id="GO:0005886">
    <property type="term" value="C:plasma membrane"/>
    <property type="evidence" value="ECO:0000314"/>
    <property type="project" value="PomBase"/>
</dbReference>
<dbReference type="GO" id="GO:0005096">
    <property type="term" value="F:GTPase activator activity"/>
    <property type="evidence" value="ECO:0000255"/>
    <property type="project" value="PomBase"/>
</dbReference>
<dbReference type="GO" id="GO:0005543">
    <property type="term" value="F:phospholipid binding"/>
    <property type="evidence" value="ECO:0000314"/>
    <property type="project" value="PomBase"/>
</dbReference>
<dbReference type="GO" id="GO:0008270">
    <property type="term" value="F:zinc ion binding"/>
    <property type="evidence" value="ECO:0007669"/>
    <property type="project" value="UniProtKB-KW"/>
</dbReference>
<dbReference type="GO" id="GO:0016192">
    <property type="term" value="P:vesicle-mediated transport"/>
    <property type="evidence" value="ECO:0000303"/>
    <property type="project" value="PomBase"/>
</dbReference>
<dbReference type="CDD" id="cd08204">
    <property type="entry name" value="ArfGap"/>
    <property type="match status" value="1"/>
</dbReference>
<dbReference type="CDD" id="cd07608">
    <property type="entry name" value="BAR_ArfGAP_fungi"/>
    <property type="match status" value="1"/>
</dbReference>
<dbReference type="FunFam" id="1.20.1270.60:FF:000051">
    <property type="entry name" value="ARF GTPase activator (Csx2)"/>
    <property type="match status" value="1"/>
</dbReference>
<dbReference type="FunFam" id="2.30.29.30:FF:000252">
    <property type="entry name" value="ARF GTPase activator (Csx2)"/>
    <property type="match status" value="1"/>
</dbReference>
<dbReference type="FunFam" id="1.10.220.150:FF:000009">
    <property type="entry name" value="stromal membrane-associated protein 1 isoform X1"/>
    <property type="match status" value="1"/>
</dbReference>
<dbReference type="Gene3D" id="1.10.220.150">
    <property type="entry name" value="Arf GTPase activating protein"/>
    <property type="match status" value="1"/>
</dbReference>
<dbReference type="Gene3D" id="1.20.1270.60">
    <property type="entry name" value="Arfaptin homology (AH) domain/BAR domain"/>
    <property type="match status" value="1"/>
</dbReference>
<dbReference type="Gene3D" id="2.30.29.30">
    <property type="entry name" value="Pleckstrin-homology domain (PH domain)/Phosphotyrosine-binding domain (PTB)"/>
    <property type="match status" value="1"/>
</dbReference>
<dbReference type="InterPro" id="IPR045258">
    <property type="entry name" value="ACAP1/2/3-like"/>
</dbReference>
<dbReference type="InterPro" id="IPR027267">
    <property type="entry name" value="AH/BAR_dom_sf"/>
</dbReference>
<dbReference type="InterPro" id="IPR037278">
    <property type="entry name" value="ARFGAP/RecO"/>
</dbReference>
<dbReference type="InterPro" id="IPR001164">
    <property type="entry name" value="ArfGAP_dom"/>
</dbReference>
<dbReference type="InterPro" id="IPR038508">
    <property type="entry name" value="ArfGAP_dom_sf"/>
</dbReference>
<dbReference type="InterPro" id="IPR004148">
    <property type="entry name" value="BAR_dom"/>
</dbReference>
<dbReference type="InterPro" id="IPR011993">
    <property type="entry name" value="PH-like_dom_sf"/>
</dbReference>
<dbReference type="InterPro" id="IPR001849">
    <property type="entry name" value="PH_domain"/>
</dbReference>
<dbReference type="PANTHER" id="PTHR23180">
    <property type="entry name" value="CENTAURIN/ARF"/>
    <property type="match status" value="1"/>
</dbReference>
<dbReference type="PANTHER" id="PTHR23180:SF409">
    <property type="entry name" value="PROTEIN CSX2"/>
    <property type="match status" value="1"/>
</dbReference>
<dbReference type="Pfam" id="PF01412">
    <property type="entry name" value="ArfGap"/>
    <property type="match status" value="1"/>
</dbReference>
<dbReference type="Pfam" id="PF16746">
    <property type="entry name" value="BAR_3"/>
    <property type="match status" value="1"/>
</dbReference>
<dbReference type="Pfam" id="PF00169">
    <property type="entry name" value="PH"/>
    <property type="match status" value="1"/>
</dbReference>
<dbReference type="PRINTS" id="PR00405">
    <property type="entry name" value="REVINTRACTNG"/>
</dbReference>
<dbReference type="SMART" id="SM00105">
    <property type="entry name" value="ArfGap"/>
    <property type="match status" value="1"/>
</dbReference>
<dbReference type="SMART" id="SM00233">
    <property type="entry name" value="PH"/>
    <property type="match status" value="1"/>
</dbReference>
<dbReference type="SUPFAM" id="SSF57863">
    <property type="entry name" value="ArfGap/RecO-like zinc finger"/>
    <property type="match status" value="1"/>
</dbReference>
<dbReference type="SUPFAM" id="SSF103657">
    <property type="entry name" value="BAR/IMD domain-like"/>
    <property type="match status" value="1"/>
</dbReference>
<dbReference type="SUPFAM" id="SSF50729">
    <property type="entry name" value="PH domain-like"/>
    <property type="match status" value="1"/>
</dbReference>
<dbReference type="PROSITE" id="PS50115">
    <property type="entry name" value="ARFGAP"/>
    <property type="match status" value="1"/>
</dbReference>
<dbReference type="PROSITE" id="PS50003">
    <property type="entry name" value="PH_DOMAIN"/>
    <property type="match status" value="1"/>
</dbReference>
<reference key="1">
    <citation type="journal article" date="2002" name="Nature">
        <title>The genome sequence of Schizosaccharomyces pombe.</title>
        <authorList>
            <person name="Wood V."/>
            <person name="Gwilliam R."/>
            <person name="Rajandream M.A."/>
            <person name="Lyne M.H."/>
            <person name="Lyne R."/>
            <person name="Stewart A."/>
            <person name="Sgouros J.G."/>
            <person name="Peat N."/>
            <person name="Hayles J."/>
            <person name="Baker S.G."/>
            <person name="Basham D."/>
            <person name="Bowman S."/>
            <person name="Brooks K."/>
            <person name="Brown D."/>
            <person name="Brown S."/>
            <person name="Chillingworth T."/>
            <person name="Churcher C.M."/>
            <person name="Collins M."/>
            <person name="Connor R."/>
            <person name="Cronin A."/>
            <person name="Davis P."/>
            <person name="Feltwell T."/>
            <person name="Fraser A."/>
            <person name="Gentles S."/>
            <person name="Goble A."/>
            <person name="Hamlin N."/>
            <person name="Harris D.E."/>
            <person name="Hidalgo J."/>
            <person name="Hodgson G."/>
            <person name="Holroyd S."/>
            <person name="Hornsby T."/>
            <person name="Howarth S."/>
            <person name="Huckle E.J."/>
            <person name="Hunt S."/>
            <person name="Jagels K."/>
            <person name="James K.D."/>
            <person name="Jones L."/>
            <person name="Jones M."/>
            <person name="Leather S."/>
            <person name="McDonald S."/>
            <person name="McLean J."/>
            <person name="Mooney P."/>
            <person name="Moule S."/>
            <person name="Mungall K.L."/>
            <person name="Murphy L.D."/>
            <person name="Niblett D."/>
            <person name="Odell C."/>
            <person name="Oliver K."/>
            <person name="O'Neil S."/>
            <person name="Pearson D."/>
            <person name="Quail M.A."/>
            <person name="Rabbinowitsch E."/>
            <person name="Rutherford K.M."/>
            <person name="Rutter S."/>
            <person name="Saunders D."/>
            <person name="Seeger K."/>
            <person name="Sharp S."/>
            <person name="Skelton J."/>
            <person name="Simmonds M.N."/>
            <person name="Squares R."/>
            <person name="Squares S."/>
            <person name="Stevens K."/>
            <person name="Taylor K."/>
            <person name="Taylor R.G."/>
            <person name="Tivey A."/>
            <person name="Walsh S.V."/>
            <person name="Warren T."/>
            <person name="Whitehead S."/>
            <person name="Woodward J.R."/>
            <person name="Volckaert G."/>
            <person name="Aert R."/>
            <person name="Robben J."/>
            <person name="Grymonprez B."/>
            <person name="Weltjens I."/>
            <person name="Vanstreels E."/>
            <person name="Rieger M."/>
            <person name="Schaefer M."/>
            <person name="Mueller-Auer S."/>
            <person name="Gabel C."/>
            <person name="Fuchs M."/>
            <person name="Duesterhoeft A."/>
            <person name="Fritzc C."/>
            <person name="Holzer E."/>
            <person name="Moestl D."/>
            <person name="Hilbert H."/>
            <person name="Borzym K."/>
            <person name="Langer I."/>
            <person name="Beck A."/>
            <person name="Lehrach H."/>
            <person name="Reinhardt R."/>
            <person name="Pohl T.M."/>
            <person name="Eger P."/>
            <person name="Zimmermann W."/>
            <person name="Wedler H."/>
            <person name="Wambutt R."/>
            <person name="Purnelle B."/>
            <person name="Goffeau A."/>
            <person name="Cadieu E."/>
            <person name="Dreano S."/>
            <person name="Gloux S."/>
            <person name="Lelaure V."/>
            <person name="Mottier S."/>
            <person name="Galibert F."/>
            <person name="Aves S.J."/>
            <person name="Xiang Z."/>
            <person name="Hunt C."/>
            <person name="Moore K."/>
            <person name="Hurst S.M."/>
            <person name="Lucas M."/>
            <person name="Rochet M."/>
            <person name="Gaillardin C."/>
            <person name="Tallada V.A."/>
            <person name="Garzon A."/>
            <person name="Thode G."/>
            <person name="Daga R.R."/>
            <person name="Cruzado L."/>
            <person name="Jimenez J."/>
            <person name="Sanchez M."/>
            <person name="del Rey F."/>
            <person name="Benito J."/>
            <person name="Dominguez A."/>
            <person name="Revuelta J.L."/>
            <person name="Moreno S."/>
            <person name="Armstrong J."/>
            <person name="Forsburg S.L."/>
            <person name="Cerutti L."/>
            <person name="Lowe T."/>
            <person name="McCombie W.R."/>
            <person name="Paulsen I."/>
            <person name="Potashkin J."/>
            <person name="Shpakovski G.V."/>
            <person name="Ussery D."/>
            <person name="Barrell B.G."/>
            <person name="Nurse P."/>
        </authorList>
    </citation>
    <scope>NUCLEOTIDE SEQUENCE [LARGE SCALE GENOMIC DNA]</scope>
    <source>
        <strain>972 / ATCC 24843</strain>
    </source>
</reference>
<reference key="2">
    <citation type="submission" date="1996-02" db="EMBL/GenBank/DDBJ databases">
        <authorList>
            <person name="Saitoh S."/>
            <person name="Takahashi K."/>
            <person name="Nabeshima K."/>
            <person name="Yamashita Y."/>
            <person name="Nakaseko Y."/>
            <person name="Hirata A."/>
            <person name="Yanagida M."/>
        </authorList>
    </citation>
    <scope>NUCLEOTIDE SEQUENCE [GENOMIC DNA] OF 158-345</scope>
</reference>
<reference key="3">
    <citation type="journal article" date="2008" name="J. Proteome Res.">
        <title>Phosphoproteome analysis of fission yeast.</title>
        <authorList>
            <person name="Wilson-Grady J.T."/>
            <person name="Villen J."/>
            <person name="Gygi S.P."/>
        </authorList>
    </citation>
    <scope>PHOSPHORYLATION [LARGE SCALE ANALYSIS] AT SER-625; SER-653 AND SER-655</scope>
    <scope>IDENTIFICATION BY MASS SPECTROMETRY</scope>
</reference>
<evidence type="ECO:0000255" key="1">
    <source>
        <dbReference type="PROSITE-ProRule" id="PRU00145"/>
    </source>
</evidence>
<evidence type="ECO:0000255" key="2">
    <source>
        <dbReference type="PROSITE-ProRule" id="PRU00288"/>
    </source>
</evidence>
<evidence type="ECO:0000256" key="3">
    <source>
        <dbReference type="SAM" id="MobiDB-lite"/>
    </source>
</evidence>
<evidence type="ECO:0000269" key="4">
    <source>
    </source>
</evidence>
<evidence type="ECO:0000305" key="5"/>
<organism>
    <name type="scientific">Schizosaccharomyces pombe (strain 972 / ATCC 24843)</name>
    <name type="common">Fission yeast</name>
    <dbReference type="NCBI Taxonomy" id="284812"/>
    <lineage>
        <taxon>Eukaryota</taxon>
        <taxon>Fungi</taxon>
        <taxon>Dikarya</taxon>
        <taxon>Ascomycota</taxon>
        <taxon>Taphrinomycotina</taxon>
        <taxon>Schizosaccharomycetes</taxon>
        <taxon>Schizosaccharomycetales</taxon>
        <taxon>Schizosaccharomycetaceae</taxon>
        <taxon>Schizosaccharomyces</taxon>
    </lineage>
</organism>
<sequence>MTGHVDPVHFERLKIQSVTFGSANDNASLQVHNVSKSPEYSKYSYSRKNNEPIEFIQLREEEGPIVKVEEEDGLTLRFQLEFHAQEGKRDVTNLTCVYGTSPQQLDRLITREFSSDANFQNNHQVFLIGNIEFHSNENSKKIEWTWSNQSLHTLYFRNGGSPIYLCFAEYDKRLNCLVPLKTFQFYVTESDQDSTPATPFPMPMHLAEETATSPEISDAPPLSGNVDPLPINSPPLTNPVARDIDQTEPEDGPLFRATILNYERTTHDMRMVLKKLIKRIEHVAHSHGLLYMSYKELMSAFERVATINPPAFKPFLDHYYAAAAQSFDSFNIDRARLLRNFLIEPLRKIYDTDIKNVSTKKKDFEETSRDYYTSLSRYLSKSEKETSSDKTKESKFAAKKRDFELSRFDYYSYMQDINGGRKGQEVLSVLTSFAANDYNLIHSSLTDIDALRPSIIQLQDIVTEANKEFQLLRAEREERRRYIETSSRELEDKDAEIAAQAYKAKVDQDTSAKQGLLLAFSKSTSDLQVVGKSGWHKYWVVLDHGKICEYANWKQSLELHTEPIDLLMATVRPAQSVSRKFCFEVITPQTKRTYQATSKAEMHSWIEAIQYSISESIVQKGKGTSMNSEETSVKHGPTSTIGKALQRVASVTSPSRHNSDSKEKKQTKSPSLVKTLKEMHSSDQSCADCNTTARVEWCAINFPVVLCIDCSGIHRSLGTHITKIRSLTLDKFNPETVDLLYATGNSFVNEIYEGGITDWKIKNFENQERRVQFVKDKYLYKRFIKSSFSHDPNTGLLESIEHSNLKEAVLCLALGADVNYQRAVVKALLKNNYLIAELLTLNGASLNVDEVTMETLSARAQAFVMNRATP</sequence>
<feature type="chain" id="PRO_0000074223" description="Protein csx2">
    <location>
        <begin position="1"/>
        <end position="870"/>
    </location>
</feature>
<feature type="domain" description="PH" evidence="1">
    <location>
        <begin position="510"/>
        <end position="614"/>
    </location>
</feature>
<feature type="domain" description="Arf-GAP" evidence="2">
    <location>
        <begin position="670"/>
        <end position="791"/>
    </location>
</feature>
<feature type="zinc finger region" description="C4-type" evidence="2">
    <location>
        <begin position="686"/>
        <end position="710"/>
    </location>
</feature>
<feature type="region of interest" description="Disordered" evidence="3">
    <location>
        <begin position="212"/>
        <end position="251"/>
    </location>
</feature>
<feature type="region of interest" description="Disordered" evidence="3">
    <location>
        <begin position="647"/>
        <end position="672"/>
    </location>
</feature>
<feature type="compositionally biased region" description="Basic and acidic residues" evidence="3">
    <location>
        <begin position="657"/>
        <end position="666"/>
    </location>
</feature>
<feature type="modified residue" description="Phosphoserine" evidence="4">
    <location>
        <position position="625"/>
    </location>
</feature>
<feature type="modified residue" description="Phosphoserine" evidence="4">
    <location>
        <position position="653"/>
    </location>
</feature>
<feature type="modified residue" description="Phosphoserine" evidence="4">
    <location>
        <position position="655"/>
    </location>
</feature>
<feature type="sequence conflict" description="In Ref. 2; BAA11920." evidence="5" ref="2">
    <original>NGGSPIYLC</original>
    <variation>VVQFVLNMQ</variation>
    <location>
        <begin position="158"/>
        <end position="166"/>
    </location>
</feature>
<feature type="sequence conflict" description="In Ref. 2; BAA11920." evidence="5" ref="2">
    <original>E</original>
    <variation>G</variation>
    <location>
        <position position="302"/>
    </location>
</feature>
<proteinExistence type="evidence at protein level"/>
<name>CSX2_SCHPO</name>
<keyword id="KW-0343">GTPase activation</keyword>
<keyword id="KW-0479">Metal-binding</keyword>
<keyword id="KW-0597">Phosphoprotein</keyword>
<keyword id="KW-1185">Reference proteome</keyword>
<keyword id="KW-0862">Zinc</keyword>
<keyword id="KW-0863">Zinc-finger</keyword>